<proteinExistence type="evidence at protein level"/>
<gene>
    <name type="primary">Tap2</name>
    <name type="synonym">Abcb3</name>
    <name type="synonym">Mtp2</name>
</gene>
<feature type="chain" id="PRO_0000093331" description="Antigen peptide transporter 2">
    <location>
        <begin position="1"/>
        <end position="703"/>
    </location>
</feature>
<feature type="topological domain" description="Lumenal" evidence="3">
    <location>
        <begin position="1"/>
        <end position="6"/>
    </location>
</feature>
<feature type="transmembrane region" description="Helical; Name=1" evidence="5">
    <location>
        <begin position="7"/>
        <end position="27"/>
    </location>
</feature>
<feature type="topological domain" description="Cytoplasmic" evidence="3">
    <location>
        <begin position="28"/>
        <end position="56"/>
    </location>
</feature>
<feature type="transmembrane region" description="Helical; Name=2" evidence="5">
    <location>
        <begin position="57"/>
        <end position="77"/>
    </location>
</feature>
<feature type="topological domain" description="Lumenal" evidence="3">
    <location>
        <begin position="78"/>
        <end position="98"/>
    </location>
</feature>
<feature type="transmembrane region" description="Helical; Name=3" evidence="5">
    <location>
        <begin position="99"/>
        <end position="119"/>
    </location>
</feature>
<feature type="topological domain" description="Cytoplasmic" evidence="3">
    <location>
        <begin position="120"/>
        <end position="148"/>
    </location>
</feature>
<feature type="transmembrane region" description="Helical; Name=4" evidence="5">
    <location>
        <begin position="149"/>
        <end position="169"/>
    </location>
</feature>
<feature type="topological domain" description="Lumenal" evidence="3">
    <location>
        <begin position="170"/>
        <end position="187"/>
    </location>
</feature>
<feature type="transmembrane region" description="Helical; Name=5" evidence="5">
    <location>
        <begin position="188"/>
        <end position="208"/>
    </location>
</feature>
<feature type="topological domain" description="Cytoplasmic" evidence="3">
    <location>
        <begin position="209"/>
        <end position="266"/>
    </location>
</feature>
<feature type="transmembrane region" description="Helical; Name=6" evidence="5">
    <location>
        <begin position="267"/>
        <end position="287"/>
    </location>
</feature>
<feature type="topological domain" description="Lumenal" evidence="3">
    <location>
        <begin position="288"/>
        <end position="293"/>
    </location>
</feature>
<feature type="transmembrane region" description="Helical; Name=7" evidence="5">
    <location>
        <begin position="294"/>
        <end position="314"/>
    </location>
</feature>
<feature type="topological domain" description="Cytoplasmic" evidence="3">
    <location>
        <begin position="315"/>
        <end position="374"/>
    </location>
</feature>
<feature type="transmembrane region" description="Helical; Name=8" evidence="5">
    <location>
        <begin position="375"/>
        <end position="395"/>
    </location>
</feature>
<feature type="topological domain" description="Lumenal" evidence="3">
    <location>
        <begin position="396"/>
        <end position="408"/>
    </location>
</feature>
<feature type="transmembrane region" description="Helical; Name=9" evidence="5">
    <location>
        <begin position="409"/>
        <end position="429"/>
    </location>
</feature>
<feature type="topological domain" description="Cytoplasmic" evidence="3">
    <location>
        <begin position="430"/>
        <end position="703"/>
    </location>
</feature>
<feature type="domain" description="ABC transmembrane type-1" evidence="5">
    <location>
        <begin position="152"/>
        <end position="435"/>
    </location>
</feature>
<feature type="domain" description="ABC transporter" evidence="4">
    <location>
        <begin position="468"/>
        <end position="702"/>
    </location>
</feature>
<feature type="region of interest" description="Part of the peptide-binding site" evidence="2">
    <location>
        <begin position="301"/>
        <end position="389"/>
    </location>
</feature>
<feature type="region of interest" description="Part of the peptide-binding site" evidence="2">
    <location>
        <begin position="414"/>
        <end position="433"/>
    </location>
</feature>
<feature type="binding site" evidence="4">
    <location>
        <begin position="503"/>
        <end position="510"/>
    </location>
    <ligand>
        <name>ATP</name>
        <dbReference type="ChEBI" id="CHEBI:30616"/>
    </ligand>
</feature>
<feature type="site" description="Inter-subunit salt bridge with TAPBP" evidence="2">
    <location>
        <position position="16"/>
    </location>
</feature>
<feature type="sequence variant" description="In TAP2L." evidence="6">
    <original>V</original>
    <variation>F</variation>
    <location>
        <position position="352"/>
    </location>
</feature>
<feature type="sequence variant" description="In TAP2L." evidence="6">
    <original>K</original>
    <variation>R</variation>
    <location>
        <position position="603"/>
    </location>
</feature>
<feature type="mutagenesis site" description="Has negligible effect on ATPase activity." evidence="7">
    <original>AV</original>
    <variation>SG</variation>
    <location>
        <begin position="608"/>
        <end position="609"/>
    </location>
</feature>
<feature type="mutagenesis site" description="Impairs peptide loading onto MHCI." evidence="7">
    <original>E</original>
    <variation>D</variation>
    <location>
        <position position="632"/>
    </location>
</feature>
<feature type="mutagenesis site" description="Has negligible effect on ATPase activity." evidence="7">
    <original>E</original>
    <variation>Q</variation>
    <location>
        <position position="632"/>
    </location>
</feature>
<name>TAP2_RAT</name>
<organism>
    <name type="scientific">Rattus norvegicus</name>
    <name type="common">Rat</name>
    <dbReference type="NCBI Taxonomy" id="10116"/>
    <lineage>
        <taxon>Eukaryota</taxon>
        <taxon>Metazoa</taxon>
        <taxon>Chordata</taxon>
        <taxon>Craniata</taxon>
        <taxon>Vertebrata</taxon>
        <taxon>Euteleostomi</taxon>
        <taxon>Mammalia</taxon>
        <taxon>Eutheria</taxon>
        <taxon>Euarchontoglires</taxon>
        <taxon>Glires</taxon>
        <taxon>Rodentia</taxon>
        <taxon>Myomorpha</taxon>
        <taxon>Muroidea</taxon>
        <taxon>Muridae</taxon>
        <taxon>Murinae</taxon>
        <taxon>Rattus</taxon>
    </lineage>
</organism>
<reference key="1">
    <citation type="journal article" date="1991" name="Nature">
        <title>Restoration of antigen presentation to the mutant cell line RMA-S by an MHC-linked transporter.</title>
        <authorList>
            <person name="Powis S.J."/>
            <person name="Townsend A.R.M."/>
            <person name="Deverson E.V."/>
            <person name="Bastin J."/>
            <person name="Butcher G.W."/>
            <person name="Howard J.C."/>
        </authorList>
    </citation>
    <scope>NUCLEOTIDE SEQUENCE [MRNA]</scope>
</reference>
<reference key="2">
    <citation type="journal article" date="1992" name="Nature">
        <title>Effect of polymorphism of an MHC-linked transporter on the peptides assembled in a class I molecule.</title>
        <authorList>
            <person name="Powis S.J."/>
            <person name="Deverson E.V."/>
            <person name="Coadwell W.J."/>
            <person name="Ciruela A."/>
            <person name="Huskisson N.S."/>
            <person name="Smith H."/>
            <person name="Butcher G.W."/>
            <person name="Howard J.C."/>
        </authorList>
    </citation>
    <scope>NUCLEOTIDE SEQUENCE [MRNA]</scope>
    <scope>VARIANTS TAP2L PHE-352 AND ARG-603</scope>
</reference>
<reference key="3">
    <citation type="journal article" date="1994" name="Immunogenetics">
        <title>The distribution of Tap2 alleles among laboratory rat RT1 haplotypes.</title>
        <authorList>
            <person name="Joly E."/>
            <person name="Deverson E.V."/>
            <person name="Coadwell W.L."/>
            <person name="Guenther E."/>
            <person name="Howard J.C."/>
            <person name="Butcher G.W."/>
        </authorList>
    </citation>
    <scope>NUCLEOTIDE SEQUENCE [MRNA]</scope>
    <source>
        <strain>PVG-RT1L(LEW)</strain>
    </source>
</reference>
<reference key="4">
    <citation type="journal article" date="2006" name="Mol. Cell">
        <title>Distinct structural and functional properties of the ATPase sites in an asymmetric ABC transporter.</title>
        <authorList>
            <person name="Procko E."/>
            <person name="Ferrin-O'Connell I."/>
            <person name="Ng S.L."/>
            <person name="Gaudet R."/>
        </authorList>
    </citation>
    <scope>FUNCTION</scope>
    <scope>CATALYTIC ACTIVITY</scope>
    <scope>MUTAGENESIS OF 608-ALA-VAL-609 AND GLU-632</scope>
</reference>
<sequence length="703" mass="77713">MALSHPRPWASLLLVDLALLGLLQSSLGTLLPPGLPGLWLEGTLRLGVLWGLLKVGGLLRLVGTFLPLLCLTNPLFFSLRALVGSTMSTSVVRVASASWGWLLADYGAVALSLAVWAVLSPAGAQEKEPGQENNRALMIRLLRLSKPDLPFLIVAFIFLAMAVWWEMFIPHYSGRVIDILGGDFDPDAFASAIFFMCLFSVGSSLSAGCRGGSFLFAESRINLRIREQLFSSLLRQDLAFFQETKTGELNSRLSSDTSLMSQWLSLNANILLRSLVKVVGLYYFMLQVSPRLTFLSLLDLPLTIAAEKVYNPRHQAVLKEIQDAVAKAGQVVREAVGGLQTVRSFGAEEQEVRRYKEALERCRQLWWRRDLEKSLYLVIQRVMALGMQVLILNVGVQQILAGEVTRGGLLSFLLYQEEVGHHVQNLVYMYGDMLSNVGAAEKVFSYLDRRPNLPNPGTLAPPRLEGRVEFQDVSFSYPSRPEKPVLQGLTFTLHPGKVTALVGPNGSGKSTVAALLQNLYQPTGGQLLLDGEPLVQYDHHYLHRQVVLVGQEPVLFSGSVKDNIAYGLRDCEDAQVMAAAQAACADDFIGEMTNGINTEIGEKGSQLAVGQKQRLAIARALVRNPRVLILDEATSALDAECEQALQTWRSQEDRTMLVIAHRLHTVQNADQVLVLKQGQLVEHDQLRDEQDVYAHLVQQRLEA</sequence>
<protein>
    <recommendedName>
        <fullName>Antigen peptide transporter 2</fullName>
        <shortName>APT2</shortName>
        <ecNumber evidence="9">7.4.2.14</ecNumber>
    </recommendedName>
    <alternativeName>
        <fullName>ATP-binding cassette sub-family B member 3</fullName>
    </alternativeName>
</protein>
<accession>P36372</accession>
<comment type="function">
    <text evidence="2 7">ABC transporter associated with antigen processing (PubMed:17018292). In complex with TAP1 mediates unidirectional translocation of peptide antigens from cytosol to endoplasmic reticulum (ER) for loading onto MHC class I (MHCI) molecules (By similarity). Uses the chemical energy of ATP to export peptides against the concentration gradient (By similarity). During the transport cycle alternates between 'inward-facing' state with peptide binding site facing the cytosol to 'outward-facing' state with peptide binding site facing the ER lumen. Peptide antigen binding to ATP-loaded TAP1-TAP2 induces a switch to hydrolysis-competent 'outward-facing' conformation ready for peptide loading onto nascent MHCI molecules. Subsequently ATP hydrolysis resets the transporter to the 'inward facing' state for a new cycle (By similarity). As a component of the peptide loading complex (PLC), acts as a molecular scaffold essential for peptide-MHCI assembly and antigen presentation (By similarity).</text>
</comment>
<comment type="catalytic activity">
    <reaction evidence="9">
        <text>a peptide antigen(in) + ATP + H2O = a peptide antigen(out) + ADP + phosphate + H(+)</text>
        <dbReference type="Rhea" id="RHEA:65972"/>
        <dbReference type="Rhea" id="RHEA-COMP:16941"/>
        <dbReference type="ChEBI" id="CHEBI:15377"/>
        <dbReference type="ChEBI" id="CHEBI:15378"/>
        <dbReference type="ChEBI" id="CHEBI:30616"/>
        <dbReference type="ChEBI" id="CHEBI:43474"/>
        <dbReference type="ChEBI" id="CHEBI:166823"/>
        <dbReference type="ChEBI" id="CHEBI:456216"/>
        <dbReference type="EC" id="7.4.2.14"/>
    </reaction>
    <physiologicalReaction direction="left-to-right" evidence="9">
        <dbReference type="Rhea" id="RHEA:65973"/>
    </physiologicalReaction>
</comment>
<comment type="cofactor">
    <cofactor evidence="2">
        <name>Mg(2+)</name>
        <dbReference type="ChEBI" id="CHEBI:18420"/>
    </cofactor>
</comment>
<comment type="subunit">
    <text evidence="2">Heterodimer of TAP1 and TAP2 (TAP1-TAP2). A component of the peptide loading complex (PLC), interacts via TAPBP with MHCI heterodimer; this interaction mediates peptide-MHCI assembly.</text>
</comment>
<comment type="interaction">
    <interactant intactId="EBI-11304494">
        <id>P36372</id>
    </interactant>
    <interactant intactId="EBI-11303846">
        <id>Q77CE4</id>
        <label>gN</label>
    </interactant>
    <organismsDiffer>true</organismsDiffer>
    <experiments>2</experiments>
</comment>
<comment type="subcellular location">
    <subcellularLocation>
        <location evidence="2">Endoplasmic reticulum membrane</location>
        <topology evidence="3">Multi-pass membrane protein</topology>
    </subcellularLocation>
    <text evidence="2">The transmembrane segments seem to form a pore in the membrane.</text>
</comment>
<comment type="domain">
    <text evidence="2">The peptide-binding site is shared between the cytoplasmic loops of TAP1 and TAP2.</text>
</comment>
<comment type="domain">
    <text evidence="1">The nucleotide-binding domain (NBD) mediates ATP hydrolysis coupled to peptide translocation. Two ATP molecules are accommodated at distinct nucleotide binding sites (NBS) at TAP1-TAP2 dimer interface. Each NBS is formed by Walker A (GxxGxGKST) and Q-loop motifs from NBD of one subunit, while the NBD from the second subunit completes the active site by contributing the C loop motif (LSGGQ). Each ATP molecule is coordinated via the beta- and gamma-phosphates to a Mg2+ ion, which is necessary for ATP hydrolysis.</text>
</comment>
<comment type="similarity">
    <text evidence="8">Belongs to the ABC transporter superfamily. ABCB family. MHC peptide exporter (TC 3.A.1.209) subfamily.</text>
</comment>
<dbReference type="EC" id="7.4.2.14" evidence="9"/>
<dbReference type="EMBL" id="X63854">
    <property type="protein sequence ID" value="CAA45339.1"/>
    <property type="molecule type" value="mRNA"/>
</dbReference>
<dbReference type="EMBL" id="X75305">
    <property type="protein sequence ID" value="CAA53053.1"/>
    <property type="molecule type" value="mRNA"/>
</dbReference>
<dbReference type="PIR" id="S38400">
    <property type="entry name" value="S38400"/>
</dbReference>
<dbReference type="RefSeq" id="NP_114445.2">
    <property type="nucleotide sequence ID" value="NM_032056.3"/>
</dbReference>
<dbReference type="SMR" id="P36372"/>
<dbReference type="BioGRID" id="246934">
    <property type="interactions" value="7"/>
</dbReference>
<dbReference type="FunCoup" id="P36372">
    <property type="interactions" value="340"/>
</dbReference>
<dbReference type="IntAct" id="P36372">
    <property type="interactions" value="3"/>
</dbReference>
<dbReference type="STRING" id="10116.ENSRNOP00000000527"/>
<dbReference type="PhosphoSitePlus" id="P36372"/>
<dbReference type="jPOST" id="P36372"/>
<dbReference type="PaxDb" id="10116-ENSRNOP00000000527"/>
<dbReference type="GeneID" id="24812"/>
<dbReference type="KEGG" id="rno:24812"/>
<dbReference type="UCSC" id="RGD:3818">
    <property type="organism name" value="rat"/>
</dbReference>
<dbReference type="AGR" id="RGD:3818"/>
<dbReference type="CTD" id="6891"/>
<dbReference type="RGD" id="3818">
    <property type="gene designation" value="Tap2"/>
</dbReference>
<dbReference type="eggNOG" id="KOG0058">
    <property type="taxonomic scope" value="Eukaryota"/>
</dbReference>
<dbReference type="InParanoid" id="P36372"/>
<dbReference type="OrthoDB" id="78394at9989"/>
<dbReference type="PhylomeDB" id="P36372"/>
<dbReference type="BRENDA" id="7.4.2.14">
    <property type="organism ID" value="5301"/>
</dbReference>
<dbReference type="Reactome" id="R-RNO-1236974">
    <property type="pathway name" value="ER-Phagosome pathway"/>
</dbReference>
<dbReference type="Reactome" id="R-RNO-983170">
    <property type="pathway name" value="Antigen Presentation: Folding, assembly and peptide loading of class I MHC"/>
</dbReference>
<dbReference type="PRO" id="PR:P36372"/>
<dbReference type="Proteomes" id="UP000002494">
    <property type="component" value="Unplaced"/>
</dbReference>
<dbReference type="GO" id="GO:0005783">
    <property type="term" value="C:endoplasmic reticulum"/>
    <property type="evidence" value="ECO:0000266"/>
    <property type="project" value="RGD"/>
</dbReference>
<dbReference type="GO" id="GO:0005789">
    <property type="term" value="C:endoplasmic reticulum membrane"/>
    <property type="evidence" value="ECO:0000266"/>
    <property type="project" value="RGD"/>
</dbReference>
<dbReference type="GO" id="GO:0016020">
    <property type="term" value="C:membrane"/>
    <property type="evidence" value="ECO:0000266"/>
    <property type="project" value="RGD"/>
</dbReference>
<dbReference type="GO" id="GO:0042824">
    <property type="term" value="C:MHC class I peptide loading complex"/>
    <property type="evidence" value="ECO:0000314"/>
    <property type="project" value="UniProtKB"/>
</dbReference>
<dbReference type="GO" id="GO:0042825">
    <property type="term" value="C:TAP complex"/>
    <property type="evidence" value="ECO:0000314"/>
    <property type="project" value="UniProtKB"/>
</dbReference>
<dbReference type="GO" id="GO:0015433">
    <property type="term" value="F:ABC-type peptide antigen transporter activity"/>
    <property type="evidence" value="ECO:0000266"/>
    <property type="project" value="RGD"/>
</dbReference>
<dbReference type="GO" id="GO:0015440">
    <property type="term" value="F:ABC-type peptide transporter activity"/>
    <property type="evidence" value="ECO:0000318"/>
    <property type="project" value="GO_Central"/>
</dbReference>
<dbReference type="GO" id="GO:0043531">
    <property type="term" value="F:ADP binding"/>
    <property type="evidence" value="ECO:0000314"/>
    <property type="project" value="RGD"/>
</dbReference>
<dbReference type="GO" id="GO:0005524">
    <property type="term" value="F:ATP binding"/>
    <property type="evidence" value="ECO:0000314"/>
    <property type="project" value="UniProtKB"/>
</dbReference>
<dbReference type="GO" id="GO:0016887">
    <property type="term" value="F:ATP hydrolysis activity"/>
    <property type="evidence" value="ECO:0007669"/>
    <property type="project" value="InterPro"/>
</dbReference>
<dbReference type="GO" id="GO:0042802">
    <property type="term" value="F:identical protein binding"/>
    <property type="evidence" value="ECO:0000353"/>
    <property type="project" value="RGD"/>
</dbReference>
<dbReference type="GO" id="GO:0046872">
    <property type="term" value="F:metal ion binding"/>
    <property type="evidence" value="ECO:0007669"/>
    <property type="project" value="UniProtKB-KW"/>
</dbReference>
<dbReference type="GO" id="GO:0042288">
    <property type="term" value="F:MHC class I protein binding"/>
    <property type="evidence" value="ECO:0000314"/>
    <property type="project" value="UniProtKB"/>
</dbReference>
<dbReference type="GO" id="GO:0023029">
    <property type="term" value="F:MHC class Ib protein binding"/>
    <property type="evidence" value="ECO:0000266"/>
    <property type="project" value="RGD"/>
</dbReference>
<dbReference type="GO" id="GO:0000166">
    <property type="term" value="F:nucleotide binding"/>
    <property type="evidence" value="ECO:0000314"/>
    <property type="project" value="RGD"/>
</dbReference>
<dbReference type="GO" id="GO:0042605">
    <property type="term" value="F:peptide antigen binding"/>
    <property type="evidence" value="ECO:0000266"/>
    <property type="project" value="RGD"/>
</dbReference>
<dbReference type="GO" id="GO:1904680">
    <property type="term" value="F:peptide transmembrane transporter activity"/>
    <property type="evidence" value="ECO:0000266"/>
    <property type="project" value="RGD"/>
</dbReference>
<dbReference type="GO" id="GO:0042803">
    <property type="term" value="F:protein homodimerization activity"/>
    <property type="evidence" value="ECO:0000353"/>
    <property type="project" value="UniProtKB"/>
</dbReference>
<dbReference type="GO" id="GO:0044877">
    <property type="term" value="F:protein-containing complex binding"/>
    <property type="evidence" value="ECO:0000314"/>
    <property type="project" value="RGD"/>
</dbReference>
<dbReference type="GO" id="GO:0046978">
    <property type="term" value="F:TAP1 binding"/>
    <property type="evidence" value="ECO:0000353"/>
    <property type="project" value="UniProtKB"/>
</dbReference>
<dbReference type="GO" id="GO:0046979">
    <property type="term" value="F:TAP2 binding"/>
    <property type="evidence" value="ECO:0000353"/>
    <property type="project" value="UniProtKB"/>
</dbReference>
<dbReference type="GO" id="GO:0046980">
    <property type="term" value="F:tapasin binding"/>
    <property type="evidence" value="ECO:0000314"/>
    <property type="project" value="RGD"/>
</dbReference>
<dbReference type="GO" id="GO:0019885">
    <property type="term" value="P:antigen processing and presentation of endogenous peptide antigen via MHC class I"/>
    <property type="evidence" value="ECO:0000314"/>
    <property type="project" value="MGI"/>
</dbReference>
<dbReference type="GO" id="GO:0002485">
    <property type="term" value="P:antigen processing and presentation of endogenous peptide antigen via MHC class I via ER pathway, TAP-dependent"/>
    <property type="evidence" value="ECO:0000266"/>
    <property type="project" value="RGD"/>
</dbReference>
<dbReference type="GO" id="GO:0002489">
    <property type="term" value="P:antigen processing and presentation of endogenous peptide antigen via MHC class Ib via ER pathway, TAP-dependent"/>
    <property type="evidence" value="ECO:0000266"/>
    <property type="project" value="RGD"/>
</dbReference>
<dbReference type="GO" id="GO:0002481">
    <property type="term" value="P:antigen processing and presentation of exogenous protein antigen via MHC class Ib, TAP-dependent"/>
    <property type="evidence" value="ECO:0000266"/>
    <property type="project" value="RGD"/>
</dbReference>
<dbReference type="GO" id="GO:0046967">
    <property type="term" value="P:cytosol to endoplasmic reticulum transport"/>
    <property type="evidence" value="ECO:0000266"/>
    <property type="project" value="RGD"/>
</dbReference>
<dbReference type="GO" id="GO:0046968">
    <property type="term" value="P:peptide antigen transport"/>
    <property type="evidence" value="ECO:0000266"/>
    <property type="project" value="RGD"/>
</dbReference>
<dbReference type="GO" id="GO:0015833">
    <property type="term" value="P:peptide transport"/>
    <property type="evidence" value="ECO:0000315"/>
    <property type="project" value="RGD"/>
</dbReference>
<dbReference type="GO" id="GO:0002591">
    <property type="term" value="P:positive regulation of antigen processing and presentation of peptide antigen via MHC class I"/>
    <property type="evidence" value="ECO:0000315"/>
    <property type="project" value="RGD"/>
</dbReference>
<dbReference type="GO" id="GO:0001916">
    <property type="term" value="P:positive regulation of T cell mediated cytotoxicity"/>
    <property type="evidence" value="ECO:0000314"/>
    <property type="project" value="MGI"/>
</dbReference>
<dbReference type="GO" id="GO:0042270">
    <property type="term" value="P:protection from natural killer cell mediated cytotoxicity"/>
    <property type="evidence" value="ECO:0000315"/>
    <property type="project" value="RGD"/>
</dbReference>
<dbReference type="GO" id="GO:0015031">
    <property type="term" value="P:protein transport"/>
    <property type="evidence" value="ECO:0007669"/>
    <property type="project" value="UniProtKB-KW"/>
</dbReference>
<dbReference type="GO" id="GO:0065003">
    <property type="term" value="P:protein-containing complex assembly"/>
    <property type="evidence" value="ECO:0000314"/>
    <property type="project" value="UniProtKB"/>
</dbReference>
<dbReference type="GO" id="GO:0002237">
    <property type="term" value="P:response to molecule of bacterial origin"/>
    <property type="evidence" value="ECO:0000266"/>
    <property type="project" value="RGD"/>
</dbReference>
<dbReference type="GO" id="GO:0001913">
    <property type="term" value="P:T cell mediated cytotoxicity"/>
    <property type="evidence" value="ECO:0000266"/>
    <property type="project" value="RGD"/>
</dbReference>
<dbReference type="GO" id="GO:0055085">
    <property type="term" value="P:transmembrane transport"/>
    <property type="evidence" value="ECO:0000318"/>
    <property type="project" value="GO_Central"/>
</dbReference>
<dbReference type="CDD" id="cd18590">
    <property type="entry name" value="ABC_6TM_TAP2"/>
    <property type="match status" value="1"/>
</dbReference>
<dbReference type="FunFam" id="1.20.1560.10:FF:000042">
    <property type="entry name" value="Antigen peptide transporter 2"/>
    <property type="match status" value="1"/>
</dbReference>
<dbReference type="FunFam" id="3.40.50.300:FF:000140">
    <property type="entry name" value="Lipid A export ATP-binding/permease protein MsbA"/>
    <property type="match status" value="1"/>
</dbReference>
<dbReference type="Gene3D" id="1.20.1560.10">
    <property type="entry name" value="ABC transporter type 1, transmembrane domain"/>
    <property type="match status" value="1"/>
</dbReference>
<dbReference type="Gene3D" id="3.40.50.300">
    <property type="entry name" value="P-loop containing nucleotide triphosphate hydrolases"/>
    <property type="match status" value="1"/>
</dbReference>
<dbReference type="InterPro" id="IPR003593">
    <property type="entry name" value="AAA+_ATPase"/>
</dbReference>
<dbReference type="InterPro" id="IPR011527">
    <property type="entry name" value="ABC1_TM_dom"/>
</dbReference>
<dbReference type="InterPro" id="IPR036640">
    <property type="entry name" value="ABC1_TM_sf"/>
</dbReference>
<dbReference type="InterPro" id="IPR013305">
    <property type="entry name" value="ABC_Tap-like"/>
</dbReference>
<dbReference type="InterPro" id="IPR003439">
    <property type="entry name" value="ABC_transporter-like_ATP-bd"/>
</dbReference>
<dbReference type="InterPro" id="IPR017871">
    <property type="entry name" value="ABC_transporter-like_CS"/>
</dbReference>
<dbReference type="InterPro" id="IPR027417">
    <property type="entry name" value="P-loop_NTPase"/>
</dbReference>
<dbReference type="InterPro" id="IPR005293">
    <property type="entry name" value="Tap2/ABCB3"/>
</dbReference>
<dbReference type="InterPro" id="IPR039421">
    <property type="entry name" value="Type_1_exporter"/>
</dbReference>
<dbReference type="NCBIfam" id="TIGR00958">
    <property type="entry name" value="3a01208"/>
    <property type="match status" value="1"/>
</dbReference>
<dbReference type="PANTHER" id="PTHR43394">
    <property type="entry name" value="ATP-DEPENDENT PERMEASE MDL1, MITOCHONDRIAL"/>
    <property type="match status" value="1"/>
</dbReference>
<dbReference type="PANTHER" id="PTHR43394:SF14">
    <property type="entry name" value="TRANSPORTER 2, ATP BINDING CASSETTE SUBFAMILY B"/>
    <property type="match status" value="1"/>
</dbReference>
<dbReference type="Pfam" id="PF00664">
    <property type="entry name" value="ABC_membrane"/>
    <property type="match status" value="1"/>
</dbReference>
<dbReference type="Pfam" id="PF00005">
    <property type="entry name" value="ABC_tran"/>
    <property type="match status" value="1"/>
</dbReference>
<dbReference type="PIRSF" id="PIRSF002773">
    <property type="entry name" value="ABC_prm/ATPase_B"/>
    <property type="match status" value="1"/>
</dbReference>
<dbReference type="PRINTS" id="PR01897">
    <property type="entry name" value="TAP2PROTEIN"/>
</dbReference>
<dbReference type="SMART" id="SM00382">
    <property type="entry name" value="AAA"/>
    <property type="match status" value="1"/>
</dbReference>
<dbReference type="SUPFAM" id="SSF90123">
    <property type="entry name" value="ABC transporter transmembrane region"/>
    <property type="match status" value="1"/>
</dbReference>
<dbReference type="SUPFAM" id="SSF52540">
    <property type="entry name" value="P-loop containing nucleoside triphosphate hydrolases"/>
    <property type="match status" value="1"/>
</dbReference>
<dbReference type="PROSITE" id="PS50929">
    <property type="entry name" value="ABC_TM1F"/>
    <property type="match status" value="1"/>
</dbReference>
<dbReference type="PROSITE" id="PS00211">
    <property type="entry name" value="ABC_TRANSPORTER_1"/>
    <property type="match status" value="1"/>
</dbReference>
<dbReference type="PROSITE" id="PS50893">
    <property type="entry name" value="ABC_TRANSPORTER_2"/>
    <property type="match status" value="1"/>
</dbReference>
<evidence type="ECO:0000250" key="1">
    <source>
        <dbReference type="UniProtKB" id="P36370"/>
    </source>
</evidence>
<evidence type="ECO:0000250" key="2">
    <source>
        <dbReference type="UniProtKB" id="Q03519"/>
    </source>
</evidence>
<evidence type="ECO:0000255" key="3"/>
<evidence type="ECO:0000255" key="4">
    <source>
        <dbReference type="PROSITE-ProRule" id="PRU00434"/>
    </source>
</evidence>
<evidence type="ECO:0000255" key="5">
    <source>
        <dbReference type="PROSITE-ProRule" id="PRU00441"/>
    </source>
</evidence>
<evidence type="ECO:0000269" key="6">
    <source>
    </source>
</evidence>
<evidence type="ECO:0000269" key="7">
    <source>
    </source>
</evidence>
<evidence type="ECO:0000305" key="8"/>
<evidence type="ECO:0000305" key="9">
    <source>
    </source>
</evidence>
<keyword id="KW-1064">Adaptive immunity</keyword>
<keyword id="KW-0067">ATP-binding</keyword>
<keyword id="KW-0256">Endoplasmic reticulum</keyword>
<keyword id="KW-0391">Immunity</keyword>
<keyword id="KW-0460">Magnesium</keyword>
<keyword id="KW-0472">Membrane</keyword>
<keyword id="KW-0479">Metal-binding</keyword>
<keyword id="KW-0547">Nucleotide-binding</keyword>
<keyword id="KW-0571">Peptide transport</keyword>
<keyword id="KW-0653">Protein transport</keyword>
<keyword id="KW-1185">Reference proteome</keyword>
<keyword id="KW-1278">Translocase</keyword>
<keyword id="KW-0812">Transmembrane</keyword>
<keyword id="KW-1133">Transmembrane helix</keyword>
<keyword id="KW-0813">Transport</keyword>